<protein>
    <recommendedName>
        <fullName evidence="1">tRNA-specific 2-thiouridylase MnmA</fullName>
        <ecNumber evidence="1">2.8.1.13</ecNumber>
    </recommendedName>
</protein>
<organism>
    <name type="scientific">Brucella abortus (strain 2308)</name>
    <dbReference type="NCBI Taxonomy" id="359391"/>
    <lineage>
        <taxon>Bacteria</taxon>
        <taxon>Pseudomonadati</taxon>
        <taxon>Pseudomonadota</taxon>
        <taxon>Alphaproteobacteria</taxon>
        <taxon>Hyphomicrobiales</taxon>
        <taxon>Brucellaceae</taxon>
        <taxon>Brucella/Ochrobactrum group</taxon>
        <taxon>Brucella</taxon>
    </lineage>
</organism>
<name>MNMA_BRUA2</name>
<keyword id="KW-0067">ATP-binding</keyword>
<keyword id="KW-0963">Cytoplasm</keyword>
<keyword id="KW-1015">Disulfide bond</keyword>
<keyword id="KW-0547">Nucleotide-binding</keyword>
<keyword id="KW-1185">Reference proteome</keyword>
<keyword id="KW-0694">RNA-binding</keyword>
<keyword id="KW-0808">Transferase</keyword>
<keyword id="KW-0819">tRNA processing</keyword>
<keyword id="KW-0820">tRNA-binding</keyword>
<proteinExistence type="inferred from homology"/>
<comment type="function">
    <text evidence="1">Catalyzes the 2-thiolation of uridine at the wobble position (U34) of tRNA, leading to the formation of s(2)U34.</text>
</comment>
<comment type="catalytic activity">
    <reaction evidence="1">
        <text>S-sulfanyl-L-cysteinyl-[protein] + uridine(34) in tRNA + AH2 + ATP = 2-thiouridine(34) in tRNA + L-cysteinyl-[protein] + A + AMP + diphosphate + H(+)</text>
        <dbReference type="Rhea" id="RHEA:47032"/>
        <dbReference type="Rhea" id="RHEA-COMP:10131"/>
        <dbReference type="Rhea" id="RHEA-COMP:11726"/>
        <dbReference type="Rhea" id="RHEA-COMP:11727"/>
        <dbReference type="Rhea" id="RHEA-COMP:11728"/>
        <dbReference type="ChEBI" id="CHEBI:13193"/>
        <dbReference type="ChEBI" id="CHEBI:15378"/>
        <dbReference type="ChEBI" id="CHEBI:17499"/>
        <dbReference type="ChEBI" id="CHEBI:29950"/>
        <dbReference type="ChEBI" id="CHEBI:30616"/>
        <dbReference type="ChEBI" id="CHEBI:33019"/>
        <dbReference type="ChEBI" id="CHEBI:61963"/>
        <dbReference type="ChEBI" id="CHEBI:65315"/>
        <dbReference type="ChEBI" id="CHEBI:87170"/>
        <dbReference type="ChEBI" id="CHEBI:456215"/>
        <dbReference type="EC" id="2.8.1.13"/>
    </reaction>
</comment>
<comment type="subcellular location">
    <subcellularLocation>
        <location evidence="1">Cytoplasm</location>
    </subcellularLocation>
</comment>
<comment type="similarity">
    <text evidence="1">Belongs to the MnmA/TRMU family.</text>
</comment>
<reference key="1">
    <citation type="journal article" date="2005" name="Infect. Immun.">
        <title>Whole-genome analyses of speciation events in pathogenic Brucellae.</title>
        <authorList>
            <person name="Chain P.S."/>
            <person name="Comerci D.J."/>
            <person name="Tolmasky M.E."/>
            <person name="Larimer F.W."/>
            <person name="Malfatti S.A."/>
            <person name="Vergez L.M."/>
            <person name="Aguero F."/>
            <person name="Land M.L."/>
            <person name="Ugalde R.A."/>
            <person name="Garcia E."/>
        </authorList>
    </citation>
    <scope>NUCLEOTIDE SEQUENCE [LARGE SCALE GENOMIC DNA]</scope>
    <source>
        <strain>2308</strain>
    </source>
</reference>
<gene>
    <name evidence="1" type="primary">mnmA</name>
    <name type="synonym">trmU</name>
    <name type="ordered locus">BAB1_1607</name>
</gene>
<feature type="chain" id="PRO_1000009511" description="tRNA-specific 2-thiouridylase MnmA">
    <location>
        <begin position="1"/>
        <end position="398"/>
    </location>
</feature>
<feature type="region of interest" description="Interaction with tRNA" evidence="1">
    <location>
        <begin position="160"/>
        <end position="162"/>
    </location>
</feature>
<feature type="active site" description="Nucleophile" evidence="1">
    <location>
        <position position="114"/>
    </location>
</feature>
<feature type="active site" description="Cysteine persulfide intermediate" evidence="1">
    <location>
        <position position="210"/>
    </location>
</feature>
<feature type="binding site" evidence="1">
    <location>
        <begin position="20"/>
        <end position="27"/>
    </location>
    <ligand>
        <name>ATP</name>
        <dbReference type="ChEBI" id="CHEBI:30616"/>
    </ligand>
</feature>
<feature type="binding site" evidence="1">
    <location>
        <position position="46"/>
    </location>
    <ligand>
        <name>ATP</name>
        <dbReference type="ChEBI" id="CHEBI:30616"/>
    </ligand>
</feature>
<feature type="binding site" evidence="1">
    <location>
        <position position="138"/>
    </location>
    <ligand>
        <name>ATP</name>
        <dbReference type="ChEBI" id="CHEBI:30616"/>
    </ligand>
</feature>
<feature type="site" description="Interaction with tRNA" evidence="1">
    <location>
        <position position="139"/>
    </location>
</feature>
<feature type="site" description="Interaction with tRNA" evidence="1">
    <location>
        <position position="352"/>
    </location>
</feature>
<feature type="disulfide bond" description="Alternate" evidence="1">
    <location>
        <begin position="114"/>
        <end position="210"/>
    </location>
</feature>
<sequence>MSLNSLDLPGKPEDTRVVVAMSGGVDSSVVAGILKREGYDVVGVTLQLYDHGAAVHRAGSCCAGQDIEDARRVSESLGIPHYVLDYEARFREAVIDPFANSYVSGETPIPCVSCNQTVKFADLLQTARDLGADALATGHYIRSRANGAHRALYRPVDTDRDQSYFLFATTQEQIDYLRFPLGHLPKAQVREIAEELGLTVAKKQDSQDICFVPQGKYSDIISRLKPEAANPGDIVHIDGRTLGRHDGIVHYTVGQRRGIGVATGEALYVVHLDAANARVIVGPREALETHKVFLRDVNWLGDTPIADLPKSGMEVFAKVRSTRPPRPAVLRHADGQTWVELVDGESGIAPGQACVLYSDDSNAARVFGGGFIGRSEREPQAEEMLRRLMANADKASAA</sequence>
<accession>Q2YQB2</accession>
<evidence type="ECO:0000255" key="1">
    <source>
        <dbReference type="HAMAP-Rule" id="MF_00144"/>
    </source>
</evidence>
<dbReference type="EC" id="2.8.1.13" evidence="1"/>
<dbReference type="EMBL" id="AM040264">
    <property type="protein sequence ID" value="CAJ11563.1"/>
    <property type="molecule type" value="Genomic_DNA"/>
</dbReference>
<dbReference type="SMR" id="Q2YQB2"/>
<dbReference type="STRING" id="359391.BAB1_1607"/>
<dbReference type="KEGG" id="bmf:BAB1_1607"/>
<dbReference type="PATRIC" id="fig|359391.11.peg.1057"/>
<dbReference type="HOGENOM" id="CLU_035188_0_1_5"/>
<dbReference type="PhylomeDB" id="Q2YQB2"/>
<dbReference type="Proteomes" id="UP000002719">
    <property type="component" value="Chromosome I"/>
</dbReference>
<dbReference type="GO" id="GO:0005737">
    <property type="term" value="C:cytoplasm"/>
    <property type="evidence" value="ECO:0007669"/>
    <property type="project" value="UniProtKB-SubCell"/>
</dbReference>
<dbReference type="GO" id="GO:0005524">
    <property type="term" value="F:ATP binding"/>
    <property type="evidence" value="ECO:0007669"/>
    <property type="project" value="UniProtKB-KW"/>
</dbReference>
<dbReference type="GO" id="GO:0000049">
    <property type="term" value="F:tRNA binding"/>
    <property type="evidence" value="ECO:0007669"/>
    <property type="project" value="UniProtKB-KW"/>
</dbReference>
<dbReference type="GO" id="GO:0103016">
    <property type="term" value="F:tRNA-uridine 2-sulfurtransferase activity"/>
    <property type="evidence" value="ECO:0007669"/>
    <property type="project" value="UniProtKB-EC"/>
</dbReference>
<dbReference type="GO" id="GO:0002143">
    <property type="term" value="P:tRNA wobble position uridine thiolation"/>
    <property type="evidence" value="ECO:0007669"/>
    <property type="project" value="TreeGrafter"/>
</dbReference>
<dbReference type="CDD" id="cd01998">
    <property type="entry name" value="MnmA_TRMU-like"/>
    <property type="match status" value="1"/>
</dbReference>
<dbReference type="FunFam" id="2.30.30.280:FF:000001">
    <property type="entry name" value="tRNA-specific 2-thiouridylase MnmA"/>
    <property type="match status" value="1"/>
</dbReference>
<dbReference type="FunFam" id="3.40.50.620:FF:000115">
    <property type="entry name" value="tRNA-specific 2-thiouridylase MnmA"/>
    <property type="match status" value="1"/>
</dbReference>
<dbReference type="Gene3D" id="2.30.30.280">
    <property type="entry name" value="Adenine nucleotide alpha hydrolases-like domains"/>
    <property type="match status" value="1"/>
</dbReference>
<dbReference type="Gene3D" id="3.40.50.620">
    <property type="entry name" value="HUPs"/>
    <property type="match status" value="1"/>
</dbReference>
<dbReference type="Gene3D" id="2.40.30.10">
    <property type="entry name" value="Translation factors"/>
    <property type="match status" value="1"/>
</dbReference>
<dbReference type="HAMAP" id="MF_00144">
    <property type="entry name" value="tRNA_thiouridyl_MnmA"/>
    <property type="match status" value="1"/>
</dbReference>
<dbReference type="InterPro" id="IPR004506">
    <property type="entry name" value="MnmA-like"/>
</dbReference>
<dbReference type="InterPro" id="IPR046885">
    <property type="entry name" value="MnmA-like_C"/>
</dbReference>
<dbReference type="InterPro" id="IPR046884">
    <property type="entry name" value="MnmA-like_central"/>
</dbReference>
<dbReference type="InterPro" id="IPR023382">
    <property type="entry name" value="MnmA-like_central_sf"/>
</dbReference>
<dbReference type="InterPro" id="IPR014729">
    <property type="entry name" value="Rossmann-like_a/b/a_fold"/>
</dbReference>
<dbReference type="NCBIfam" id="NF001138">
    <property type="entry name" value="PRK00143.1"/>
    <property type="match status" value="1"/>
</dbReference>
<dbReference type="NCBIfam" id="TIGR00420">
    <property type="entry name" value="trmU"/>
    <property type="match status" value="1"/>
</dbReference>
<dbReference type="PANTHER" id="PTHR11933:SF5">
    <property type="entry name" value="MITOCHONDRIAL TRNA-SPECIFIC 2-THIOURIDYLASE 1"/>
    <property type="match status" value="1"/>
</dbReference>
<dbReference type="PANTHER" id="PTHR11933">
    <property type="entry name" value="TRNA 5-METHYLAMINOMETHYL-2-THIOURIDYLATE -METHYLTRANSFERASE"/>
    <property type="match status" value="1"/>
</dbReference>
<dbReference type="Pfam" id="PF03054">
    <property type="entry name" value="tRNA_Me_trans"/>
    <property type="match status" value="1"/>
</dbReference>
<dbReference type="Pfam" id="PF20258">
    <property type="entry name" value="tRNA_Me_trans_C"/>
    <property type="match status" value="1"/>
</dbReference>
<dbReference type="Pfam" id="PF20259">
    <property type="entry name" value="tRNA_Me_trans_M"/>
    <property type="match status" value="1"/>
</dbReference>
<dbReference type="SUPFAM" id="SSF52402">
    <property type="entry name" value="Adenine nucleotide alpha hydrolases-like"/>
    <property type="match status" value="1"/>
</dbReference>